<reference key="1">
    <citation type="journal article" date="1981" name="Toxicon">
        <title>Amino acid sequence of a lethal myotoxic phospholipase A2 from the venom of the common sea snake (Enhydrina schistosa).</title>
        <authorList>
            <person name="Lind P."/>
            <person name="Eaker D."/>
        </authorList>
    </citation>
    <scope>PROTEIN SEQUENCE</scope>
    <source>
        <tissue>Venom</tissue>
    </source>
</reference>
<reference key="2">
    <citation type="journal article" date="1987" name="J. Biol. Chem.">
        <title>Structure-function relationships of phospholipases. The anticoagulant region of phospholipases A2.</title>
        <authorList>
            <person name="Kini R.M."/>
            <person name="Evans H.J."/>
        </authorList>
    </citation>
    <scope>FUNCTION</scope>
</reference>
<accession>P00610</accession>
<proteinExistence type="evidence at protein level"/>
<comment type="function">
    <text evidence="4">Snake venom phospholipase A2 (PLA2) that has several activities. It is myotoxic, has weak anticoagulant activity and inhibits neuromuscular transmission by blocking acetylcholine release from the nerve termini. PLA2 catalyzes the calcium-dependent hydrolysis of the 2-acyl groups in 3-sn-phosphoglycerides.</text>
</comment>
<comment type="catalytic activity">
    <reaction evidence="2 3">
        <text>a 1,2-diacyl-sn-glycero-3-phosphocholine + H2O = a 1-acyl-sn-glycero-3-phosphocholine + a fatty acid + H(+)</text>
        <dbReference type="Rhea" id="RHEA:15801"/>
        <dbReference type="ChEBI" id="CHEBI:15377"/>
        <dbReference type="ChEBI" id="CHEBI:15378"/>
        <dbReference type="ChEBI" id="CHEBI:28868"/>
        <dbReference type="ChEBI" id="CHEBI:57643"/>
        <dbReference type="ChEBI" id="CHEBI:58168"/>
        <dbReference type="EC" id="3.1.1.4"/>
    </reaction>
</comment>
<comment type="cofactor">
    <cofactor evidence="1">
        <name>Ca(2+)</name>
        <dbReference type="ChEBI" id="CHEBI:29108"/>
    </cofactor>
    <text evidence="1">Binds 1 Ca(2+) ion.</text>
</comment>
<comment type="subcellular location">
    <subcellularLocation>
        <location>Secreted</location>
    </subcellularLocation>
</comment>
<comment type="tissue specificity">
    <text>Expressed by the venom gland.</text>
</comment>
<comment type="toxic dose">
    <text>LD(50) is 0.11 mg/kg by intravenous injection.</text>
</comment>
<comment type="similarity">
    <text evidence="5">Belongs to the phospholipase A2 family. Group I subfamily. D49 sub-subfamily.</text>
</comment>
<protein>
    <recommendedName>
        <fullName>Basic phospholipase A2</fullName>
        <shortName>svPLA2</shortName>
        <ecNumber>3.1.1.4</ecNumber>
    </recommendedName>
    <alternativeName>
        <fullName>Myotoxin</fullName>
    </alternativeName>
    <alternativeName>
        <fullName>Phosphatidylcholine 2-acylhydrolase</fullName>
    </alternativeName>
    <alternativeName>
        <fullName>Toxin VI-5</fullName>
    </alternativeName>
    <alternativeName>
        <fullName>Toxin VI:5b</fullName>
    </alternativeName>
</protein>
<keyword id="KW-1203">Blood coagulation cascade inhibiting toxin</keyword>
<keyword id="KW-0106">Calcium</keyword>
<keyword id="KW-0903">Direct protein sequencing</keyword>
<keyword id="KW-1015">Disulfide bond</keyword>
<keyword id="KW-1199">Hemostasis impairing toxin</keyword>
<keyword id="KW-0378">Hydrolase</keyword>
<keyword id="KW-0442">Lipid degradation</keyword>
<keyword id="KW-0443">Lipid metabolism</keyword>
<keyword id="KW-0479">Metal-binding</keyword>
<keyword id="KW-0959">Myotoxin</keyword>
<keyword id="KW-0528">Neurotoxin</keyword>
<keyword id="KW-0638">Presynaptic neurotoxin</keyword>
<keyword id="KW-0964">Secreted</keyword>
<keyword id="KW-0800">Toxin</keyword>
<organism>
    <name type="scientific">Hydrophis schistosus</name>
    <name type="common">Beaked sea snake</name>
    <name type="synonym">Enhydrina schistosa</name>
    <dbReference type="NCBI Taxonomy" id="8682"/>
    <lineage>
        <taxon>Eukaryota</taxon>
        <taxon>Metazoa</taxon>
        <taxon>Chordata</taxon>
        <taxon>Craniata</taxon>
        <taxon>Vertebrata</taxon>
        <taxon>Euteleostomi</taxon>
        <taxon>Lepidosauria</taxon>
        <taxon>Squamata</taxon>
        <taxon>Bifurcata</taxon>
        <taxon>Unidentata</taxon>
        <taxon>Episquamata</taxon>
        <taxon>Toxicofera</taxon>
        <taxon>Serpentes</taxon>
        <taxon>Colubroidea</taxon>
        <taxon>Elapidae</taxon>
        <taxon>Hydrophiinae</taxon>
        <taxon>Hydrophis</taxon>
    </lineage>
</organism>
<name>PA2B_HYDSC</name>
<evidence type="ECO:0000250" key="1"/>
<evidence type="ECO:0000255" key="2">
    <source>
        <dbReference type="PROSITE-ProRule" id="PRU10035"/>
    </source>
</evidence>
<evidence type="ECO:0000255" key="3">
    <source>
        <dbReference type="PROSITE-ProRule" id="PRU10036"/>
    </source>
</evidence>
<evidence type="ECO:0000269" key="4">
    <source>
    </source>
</evidence>
<evidence type="ECO:0000305" key="5"/>
<feature type="chain" id="PRO_0000161644" description="Basic phospholipase A2">
    <location>
        <begin position="1"/>
        <end position="119"/>
    </location>
</feature>
<feature type="active site" evidence="1">
    <location>
        <position position="48"/>
    </location>
</feature>
<feature type="active site" evidence="1">
    <location>
        <position position="93"/>
    </location>
</feature>
<feature type="binding site" evidence="1">
    <location>
        <position position="28"/>
    </location>
    <ligand>
        <name>Ca(2+)</name>
        <dbReference type="ChEBI" id="CHEBI:29108"/>
    </ligand>
</feature>
<feature type="binding site" evidence="1">
    <location>
        <position position="30"/>
    </location>
    <ligand>
        <name>Ca(2+)</name>
        <dbReference type="ChEBI" id="CHEBI:29108"/>
    </ligand>
</feature>
<feature type="binding site" evidence="1">
    <location>
        <position position="32"/>
    </location>
    <ligand>
        <name>Ca(2+)</name>
        <dbReference type="ChEBI" id="CHEBI:29108"/>
    </ligand>
</feature>
<feature type="binding site" evidence="1">
    <location>
        <position position="49"/>
    </location>
    <ligand>
        <name>Ca(2+)</name>
        <dbReference type="ChEBI" id="CHEBI:29108"/>
    </ligand>
</feature>
<feature type="disulfide bond" evidence="1">
    <location>
        <begin position="11"/>
        <end position="71"/>
    </location>
</feature>
<feature type="disulfide bond" evidence="1">
    <location>
        <begin position="27"/>
        <end position="118"/>
    </location>
</feature>
<feature type="disulfide bond" evidence="1">
    <location>
        <begin position="29"/>
        <end position="45"/>
    </location>
</feature>
<feature type="disulfide bond" evidence="1">
    <location>
        <begin position="44"/>
        <end position="99"/>
    </location>
</feature>
<feature type="disulfide bond" evidence="1">
    <location>
        <begin position="51"/>
        <end position="92"/>
    </location>
</feature>
<feature type="disulfide bond" evidence="1">
    <location>
        <begin position="60"/>
        <end position="85"/>
    </location>
</feature>
<feature type="disulfide bond" evidence="1">
    <location>
        <begin position="78"/>
        <end position="90"/>
    </location>
</feature>
<feature type="sequence variant" description="In 50% of the molecules.">
    <original>M</original>
    <variation>L</variation>
    <location>
        <position position="64"/>
    </location>
</feature>
<feature type="sequence variant" description="In 30% of the molecules.">
    <original>E</original>
    <variation>K</variation>
    <location>
        <position position="98"/>
    </location>
</feature>
<sequence length="119" mass="13446">NLVQFSYVITCANHNRRSSLDYADYGCYCGAGGSGTPVDELDRCCKIHDDCYGEAEKQGCYPKMLMYDYYCGSNGPYCRNVKKKCNRKVCDCDVAAAECFARNAYNNANYNIDTKKRCK</sequence>
<dbReference type="EC" id="3.1.1.4"/>
<dbReference type="PIR" id="A00751">
    <property type="entry name" value="PSEYA"/>
</dbReference>
<dbReference type="SMR" id="P00610"/>
<dbReference type="GO" id="GO:0005576">
    <property type="term" value="C:extracellular region"/>
    <property type="evidence" value="ECO:0007669"/>
    <property type="project" value="UniProtKB-SubCell"/>
</dbReference>
<dbReference type="GO" id="GO:0005509">
    <property type="term" value="F:calcium ion binding"/>
    <property type="evidence" value="ECO:0007669"/>
    <property type="project" value="InterPro"/>
</dbReference>
<dbReference type="GO" id="GO:0047498">
    <property type="term" value="F:calcium-dependent phospholipase A2 activity"/>
    <property type="evidence" value="ECO:0007669"/>
    <property type="project" value="TreeGrafter"/>
</dbReference>
<dbReference type="GO" id="GO:0005543">
    <property type="term" value="F:phospholipid binding"/>
    <property type="evidence" value="ECO:0007669"/>
    <property type="project" value="TreeGrafter"/>
</dbReference>
<dbReference type="GO" id="GO:0090729">
    <property type="term" value="F:toxin activity"/>
    <property type="evidence" value="ECO:0007669"/>
    <property type="project" value="UniProtKB-KW"/>
</dbReference>
<dbReference type="GO" id="GO:0050482">
    <property type="term" value="P:arachidonate secretion"/>
    <property type="evidence" value="ECO:0007669"/>
    <property type="project" value="InterPro"/>
</dbReference>
<dbReference type="GO" id="GO:0016042">
    <property type="term" value="P:lipid catabolic process"/>
    <property type="evidence" value="ECO:0007669"/>
    <property type="project" value="UniProtKB-KW"/>
</dbReference>
<dbReference type="GO" id="GO:0006644">
    <property type="term" value="P:phospholipid metabolic process"/>
    <property type="evidence" value="ECO:0007669"/>
    <property type="project" value="InterPro"/>
</dbReference>
<dbReference type="CDD" id="cd00125">
    <property type="entry name" value="PLA2c"/>
    <property type="match status" value="1"/>
</dbReference>
<dbReference type="FunFam" id="1.20.90.10:FF:000007">
    <property type="entry name" value="Acidic phospholipase A2"/>
    <property type="match status" value="1"/>
</dbReference>
<dbReference type="Gene3D" id="1.20.90.10">
    <property type="entry name" value="Phospholipase A2 domain"/>
    <property type="match status" value="1"/>
</dbReference>
<dbReference type="InterPro" id="IPR001211">
    <property type="entry name" value="PLipase_A2"/>
</dbReference>
<dbReference type="InterPro" id="IPR033112">
    <property type="entry name" value="PLipase_A2_Asp_AS"/>
</dbReference>
<dbReference type="InterPro" id="IPR016090">
    <property type="entry name" value="PLipase_A2_dom"/>
</dbReference>
<dbReference type="InterPro" id="IPR036444">
    <property type="entry name" value="PLipase_A2_dom_sf"/>
</dbReference>
<dbReference type="InterPro" id="IPR033113">
    <property type="entry name" value="PLipase_A2_His_AS"/>
</dbReference>
<dbReference type="PANTHER" id="PTHR11716:SF51">
    <property type="entry name" value="PHOSPHOLIPASE A2"/>
    <property type="match status" value="1"/>
</dbReference>
<dbReference type="PANTHER" id="PTHR11716">
    <property type="entry name" value="PHOSPHOLIPASE A2 FAMILY MEMBER"/>
    <property type="match status" value="1"/>
</dbReference>
<dbReference type="Pfam" id="PF00068">
    <property type="entry name" value="Phospholip_A2_1"/>
    <property type="match status" value="1"/>
</dbReference>
<dbReference type="PRINTS" id="PR00389">
    <property type="entry name" value="PHPHLIPASEA2"/>
</dbReference>
<dbReference type="SMART" id="SM00085">
    <property type="entry name" value="PA2c"/>
    <property type="match status" value="1"/>
</dbReference>
<dbReference type="SUPFAM" id="SSF48619">
    <property type="entry name" value="Phospholipase A2, PLA2"/>
    <property type="match status" value="1"/>
</dbReference>
<dbReference type="PROSITE" id="PS00119">
    <property type="entry name" value="PA2_ASP"/>
    <property type="match status" value="1"/>
</dbReference>
<dbReference type="PROSITE" id="PS00118">
    <property type="entry name" value="PA2_HIS"/>
    <property type="match status" value="1"/>
</dbReference>